<evidence type="ECO:0000250" key="1">
    <source>
        <dbReference type="UniProtKB" id="P10599"/>
    </source>
</evidence>
<evidence type="ECO:0000250" key="2">
    <source>
        <dbReference type="UniProtKB" id="Q9M7X9"/>
    </source>
</evidence>
<evidence type="ECO:0000255" key="3"/>
<evidence type="ECO:0000255" key="4">
    <source>
        <dbReference type="PROSITE-ProRule" id="PRU00691"/>
    </source>
</evidence>
<evidence type="ECO:0000303" key="5">
    <source>
    </source>
</evidence>
<evidence type="ECO:0000305" key="6"/>
<organism>
    <name type="scientific">Oryza sativa subsp. japonica</name>
    <name type="common">Rice</name>
    <dbReference type="NCBI Taxonomy" id="39947"/>
    <lineage>
        <taxon>Eukaryota</taxon>
        <taxon>Viridiplantae</taxon>
        <taxon>Streptophyta</taxon>
        <taxon>Embryophyta</taxon>
        <taxon>Tracheophyta</taxon>
        <taxon>Spermatophyta</taxon>
        <taxon>Magnoliopsida</taxon>
        <taxon>Liliopsida</taxon>
        <taxon>Poales</taxon>
        <taxon>Poaceae</taxon>
        <taxon>BOP clade</taxon>
        <taxon>Oryzoideae</taxon>
        <taxon>Oryzeae</taxon>
        <taxon>Oryzinae</taxon>
        <taxon>Oryza</taxon>
        <taxon>Oryza sativa</taxon>
    </lineage>
</organism>
<sequence length="189" mass="20529">MAMAAAASLLPASAAPTLPGRAFRPPRNSTPTASLSCDGGSRCRGVGLGVILGGCRAQGVRRNAAAETYVPGSGKYIAPDYLVKKVTAKELEELVRGERKVPLIVDFYATWCGPCVLMAQDIEMLAVEYENNALFVKVDTDDEYELARDMQVRGLPTLYFFSPDQSKDALRTEGLIPIDMIRNIIDNEL</sequence>
<accession>Q8H2V6</accession>
<accession>A0A0P0XF89</accession>
<feature type="transit peptide" description="Chloroplast" evidence="3">
    <location>
        <begin position="1"/>
        <end position="56"/>
    </location>
</feature>
<feature type="chain" id="PRO_0000394846" description="Thioredoxin-like protein CITRX, chloroplastic">
    <location>
        <begin position="57"/>
        <end position="189"/>
    </location>
</feature>
<feature type="domain" description="Thioredoxin" evidence="4">
    <location>
        <begin position="72"/>
        <end position="189"/>
    </location>
</feature>
<feature type="active site" description="Nucleophile" evidence="1">
    <location>
        <position position="112"/>
    </location>
</feature>
<feature type="active site" description="Nucleophile" evidence="1">
    <location>
        <position position="115"/>
    </location>
</feature>
<feature type="site" description="Deprotonates C-terminal active site Cys" evidence="1">
    <location>
        <position position="106"/>
    </location>
</feature>
<feature type="site" description="Contributes to redox potential value" evidence="1">
    <location>
        <position position="113"/>
    </location>
</feature>
<feature type="site" description="Contributes to redox potential value" evidence="1">
    <location>
        <position position="114"/>
    </location>
</feature>
<feature type="disulfide bond" description="Redox-active" evidence="4">
    <location>
        <begin position="112"/>
        <end position="115"/>
    </location>
</feature>
<protein>
    <recommendedName>
        <fullName evidence="6">Thioredoxin-like protein CITRX, chloroplastic</fullName>
        <ecNumber evidence="6">1.8.-.-</ecNumber>
    </recommendedName>
    <alternativeName>
        <fullName evidence="5">Cf-9-interacting thioredoxin</fullName>
        <shortName evidence="5">OsCiTrx</shortName>
    </alternativeName>
    <alternativeName>
        <fullName>OsTrx25</fullName>
    </alternativeName>
</protein>
<dbReference type="EC" id="1.8.-.-" evidence="6"/>
<dbReference type="EMBL" id="AP004675">
    <property type="protein sequence ID" value="BAD05405.1"/>
    <property type="molecule type" value="Genomic_DNA"/>
</dbReference>
<dbReference type="EMBL" id="AP005443">
    <property type="protein sequence ID" value="BAC22569.1"/>
    <property type="molecule type" value="Genomic_DNA"/>
</dbReference>
<dbReference type="EMBL" id="AP008214">
    <property type="protein sequence ID" value="BAF23601.1"/>
    <property type="molecule type" value="Genomic_DNA"/>
</dbReference>
<dbReference type="EMBL" id="AP014964">
    <property type="protein sequence ID" value="BAT05214.1"/>
    <property type="molecule type" value="Genomic_DNA"/>
</dbReference>
<dbReference type="EMBL" id="CM000145">
    <property type="protein sequence ID" value="EEE68599.1"/>
    <property type="molecule type" value="Genomic_DNA"/>
</dbReference>
<dbReference type="EMBL" id="AK058590">
    <property type="protein sequence ID" value="BAG86746.1"/>
    <property type="molecule type" value="mRNA"/>
</dbReference>
<dbReference type="EMBL" id="AK066851">
    <property type="protein sequence ID" value="BAG90152.1"/>
    <property type="molecule type" value="mRNA"/>
</dbReference>
<dbReference type="RefSeq" id="XP_015648902.1">
    <property type="nucleotide sequence ID" value="XM_015793416.1"/>
</dbReference>
<dbReference type="SMR" id="Q8H2V6"/>
<dbReference type="FunCoup" id="Q8H2V6">
    <property type="interactions" value="321"/>
</dbReference>
<dbReference type="STRING" id="39947.Q8H2V6"/>
<dbReference type="PaxDb" id="39947-Q8H2V6"/>
<dbReference type="EnsemblPlants" id="Os08t0378900-01">
    <property type="protein sequence ID" value="Os08t0378900-01"/>
    <property type="gene ID" value="Os08g0378900"/>
</dbReference>
<dbReference type="EnsemblPlants" id="Os08t0378900-02">
    <property type="protein sequence ID" value="Os08t0378900-02"/>
    <property type="gene ID" value="Os08g0378900"/>
</dbReference>
<dbReference type="Gramene" id="Os08t0378900-01">
    <property type="protein sequence ID" value="Os08t0378900-01"/>
    <property type="gene ID" value="Os08g0378900"/>
</dbReference>
<dbReference type="Gramene" id="Os08t0378900-02">
    <property type="protein sequence ID" value="Os08t0378900-02"/>
    <property type="gene ID" value="Os08g0378900"/>
</dbReference>
<dbReference type="KEGG" id="dosa:Os08g0378900"/>
<dbReference type="eggNOG" id="KOG0907">
    <property type="taxonomic scope" value="Eukaryota"/>
</dbReference>
<dbReference type="HOGENOM" id="CLU_110012_0_0_1"/>
<dbReference type="InParanoid" id="Q8H2V6"/>
<dbReference type="OMA" id="DEYEFAQ"/>
<dbReference type="OrthoDB" id="2121326at2759"/>
<dbReference type="Proteomes" id="UP000000763">
    <property type="component" value="Chromosome 8"/>
</dbReference>
<dbReference type="Proteomes" id="UP000007752">
    <property type="component" value="Chromosome 8"/>
</dbReference>
<dbReference type="Proteomes" id="UP000059680">
    <property type="component" value="Chromosome 8"/>
</dbReference>
<dbReference type="GO" id="GO:0009507">
    <property type="term" value="C:chloroplast"/>
    <property type="evidence" value="ECO:0007669"/>
    <property type="project" value="UniProtKB-SubCell"/>
</dbReference>
<dbReference type="GO" id="GO:0015036">
    <property type="term" value="F:disulfide oxidoreductase activity"/>
    <property type="evidence" value="ECO:0000318"/>
    <property type="project" value="GO_Central"/>
</dbReference>
<dbReference type="GO" id="GO:0047134">
    <property type="term" value="F:protein-disulfide reductase [NAD(P)H] activity"/>
    <property type="evidence" value="ECO:0007669"/>
    <property type="project" value="EnsemblPlants"/>
</dbReference>
<dbReference type="GO" id="GO:0045454">
    <property type="term" value="P:cell redox homeostasis"/>
    <property type="evidence" value="ECO:0007669"/>
    <property type="project" value="EnsemblPlants"/>
</dbReference>
<dbReference type="GO" id="GO:0009657">
    <property type="term" value="P:plastid organization"/>
    <property type="evidence" value="ECO:0000318"/>
    <property type="project" value="GO_Central"/>
</dbReference>
<dbReference type="CDD" id="cd02947">
    <property type="entry name" value="TRX_family"/>
    <property type="match status" value="1"/>
</dbReference>
<dbReference type="FunFam" id="3.40.30.10:FF:000149">
    <property type="entry name" value="Thioredoxin-like protein CITRX, chloroplastic"/>
    <property type="match status" value="1"/>
</dbReference>
<dbReference type="Gene3D" id="3.40.30.10">
    <property type="entry name" value="Glutaredoxin"/>
    <property type="match status" value="1"/>
</dbReference>
<dbReference type="InterPro" id="IPR044182">
    <property type="entry name" value="CITRX"/>
</dbReference>
<dbReference type="InterPro" id="IPR036249">
    <property type="entry name" value="Thioredoxin-like_sf"/>
</dbReference>
<dbReference type="InterPro" id="IPR017937">
    <property type="entry name" value="Thioredoxin_CS"/>
</dbReference>
<dbReference type="InterPro" id="IPR013766">
    <property type="entry name" value="Thioredoxin_domain"/>
</dbReference>
<dbReference type="PANTHER" id="PTHR47834">
    <property type="entry name" value="THIOREDOXIN-LIKE PROTEIN CITRX, CHLOROPLASTIC"/>
    <property type="match status" value="1"/>
</dbReference>
<dbReference type="PANTHER" id="PTHR47834:SF2">
    <property type="entry name" value="THIOREDOXIN-LIKE PROTEIN CITRX, CHLOROPLASTIC"/>
    <property type="match status" value="1"/>
</dbReference>
<dbReference type="Pfam" id="PF00085">
    <property type="entry name" value="Thioredoxin"/>
    <property type="match status" value="1"/>
</dbReference>
<dbReference type="PRINTS" id="PR00421">
    <property type="entry name" value="THIOREDOXIN"/>
</dbReference>
<dbReference type="SUPFAM" id="SSF52833">
    <property type="entry name" value="Thioredoxin-like"/>
    <property type="match status" value="1"/>
</dbReference>
<dbReference type="PROSITE" id="PS00194">
    <property type="entry name" value="THIOREDOXIN_1"/>
    <property type="match status" value="1"/>
</dbReference>
<dbReference type="PROSITE" id="PS51352">
    <property type="entry name" value="THIOREDOXIN_2"/>
    <property type="match status" value="1"/>
</dbReference>
<name>CITRX_ORYSJ</name>
<proteinExistence type="evidence at transcript level"/>
<reference key="1">
    <citation type="journal article" date="2005" name="Nature">
        <title>The map-based sequence of the rice genome.</title>
        <authorList>
            <consortium name="International rice genome sequencing project (IRGSP)"/>
        </authorList>
    </citation>
    <scope>NUCLEOTIDE SEQUENCE [LARGE SCALE GENOMIC DNA]</scope>
    <source>
        <strain>cv. Nipponbare</strain>
    </source>
</reference>
<reference key="2">
    <citation type="journal article" date="2008" name="Nucleic Acids Res.">
        <title>The rice annotation project database (RAP-DB): 2008 update.</title>
        <authorList>
            <consortium name="The rice annotation project (RAP)"/>
        </authorList>
    </citation>
    <scope>GENOME REANNOTATION</scope>
    <source>
        <strain>cv. Nipponbare</strain>
    </source>
</reference>
<reference key="3">
    <citation type="journal article" date="2013" name="Rice">
        <title>Improvement of the Oryza sativa Nipponbare reference genome using next generation sequence and optical map data.</title>
        <authorList>
            <person name="Kawahara Y."/>
            <person name="de la Bastide M."/>
            <person name="Hamilton J.P."/>
            <person name="Kanamori H."/>
            <person name="McCombie W.R."/>
            <person name="Ouyang S."/>
            <person name="Schwartz D.C."/>
            <person name="Tanaka T."/>
            <person name="Wu J."/>
            <person name="Zhou S."/>
            <person name="Childs K.L."/>
            <person name="Davidson R.M."/>
            <person name="Lin H."/>
            <person name="Quesada-Ocampo L."/>
            <person name="Vaillancourt B."/>
            <person name="Sakai H."/>
            <person name="Lee S.S."/>
            <person name="Kim J."/>
            <person name="Numa H."/>
            <person name="Itoh T."/>
            <person name="Buell C.R."/>
            <person name="Matsumoto T."/>
        </authorList>
    </citation>
    <scope>GENOME REANNOTATION</scope>
    <source>
        <strain>cv. Nipponbare</strain>
    </source>
</reference>
<reference key="4">
    <citation type="journal article" date="2005" name="PLoS Biol.">
        <title>The genomes of Oryza sativa: a history of duplications.</title>
        <authorList>
            <person name="Yu J."/>
            <person name="Wang J."/>
            <person name="Lin W."/>
            <person name="Li S."/>
            <person name="Li H."/>
            <person name="Zhou J."/>
            <person name="Ni P."/>
            <person name="Dong W."/>
            <person name="Hu S."/>
            <person name="Zeng C."/>
            <person name="Zhang J."/>
            <person name="Zhang Y."/>
            <person name="Li R."/>
            <person name="Xu Z."/>
            <person name="Li S."/>
            <person name="Li X."/>
            <person name="Zheng H."/>
            <person name="Cong L."/>
            <person name="Lin L."/>
            <person name="Yin J."/>
            <person name="Geng J."/>
            <person name="Li G."/>
            <person name="Shi J."/>
            <person name="Liu J."/>
            <person name="Lv H."/>
            <person name="Li J."/>
            <person name="Wang J."/>
            <person name="Deng Y."/>
            <person name="Ran L."/>
            <person name="Shi X."/>
            <person name="Wang X."/>
            <person name="Wu Q."/>
            <person name="Li C."/>
            <person name="Ren X."/>
            <person name="Wang J."/>
            <person name="Wang X."/>
            <person name="Li D."/>
            <person name="Liu D."/>
            <person name="Zhang X."/>
            <person name="Ji Z."/>
            <person name="Zhao W."/>
            <person name="Sun Y."/>
            <person name="Zhang Z."/>
            <person name="Bao J."/>
            <person name="Han Y."/>
            <person name="Dong L."/>
            <person name="Ji J."/>
            <person name="Chen P."/>
            <person name="Wu S."/>
            <person name="Liu J."/>
            <person name="Xiao Y."/>
            <person name="Bu D."/>
            <person name="Tan J."/>
            <person name="Yang L."/>
            <person name="Ye C."/>
            <person name="Zhang J."/>
            <person name="Xu J."/>
            <person name="Zhou Y."/>
            <person name="Yu Y."/>
            <person name="Zhang B."/>
            <person name="Zhuang S."/>
            <person name="Wei H."/>
            <person name="Liu B."/>
            <person name="Lei M."/>
            <person name="Yu H."/>
            <person name="Li Y."/>
            <person name="Xu H."/>
            <person name="Wei S."/>
            <person name="He X."/>
            <person name="Fang L."/>
            <person name="Zhang Z."/>
            <person name="Zhang Y."/>
            <person name="Huang X."/>
            <person name="Su Z."/>
            <person name="Tong W."/>
            <person name="Li J."/>
            <person name="Tong Z."/>
            <person name="Li S."/>
            <person name="Ye J."/>
            <person name="Wang L."/>
            <person name="Fang L."/>
            <person name="Lei T."/>
            <person name="Chen C.-S."/>
            <person name="Chen H.-C."/>
            <person name="Xu Z."/>
            <person name="Li H."/>
            <person name="Huang H."/>
            <person name="Zhang F."/>
            <person name="Xu H."/>
            <person name="Li N."/>
            <person name="Zhao C."/>
            <person name="Li S."/>
            <person name="Dong L."/>
            <person name="Huang Y."/>
            <person name="Li L."/>
            <person name="Xi Y."/>
            <person name="Qi Q."/>
            <person name="Li W."/>
            <person name="Zhang B."/>
            <person name="Hu W."/>
            <person name="Zhang Y."/>
            <person name="Tian X."/>
            <person name="Jiao Y."/>
            <person name="Liang X."/>
            <person name="Jin J."/>
            <person name="Gao L."/>
            <person name="Zheng W."/>
            <person name="Hao B."/>
            <person name="Liu S.-M."/>
            <person name="Wang W."/>
            <person name="Yuan L."/>
            <person name="Cao M."/>
            <person name="McDermott J."/>
            <person name="Samudrala R."/>
            <person name="Wang J."/>
            <person name="Wong G.K.-S."/>
            <person name="Yang H."/>
        </authorList>
    </citation>
    <scope>NUCLEOTIDE SEQUENCE [LARGE SCALE GENOMIC DNA]</scope>
    <source>
        <strain>cv. Nipponbare</strain>
    </source>
</reference>
<reference key="5">
    <citation type="journal article" date="2003" name="Science">
        <title>Collection, mapping, and annotation of over 28,000 cDNA clones from japonica rice.</title>
        <authorList>
            <consortium name="The rice full-length cDNA consortium"/>
        </authorList>
    </citation>
    <scope>NUCLEOTIDE SEQUENCE [LARGE SCALE MRNA]</scope>
    <source>
        <strain>cv. Nipponbare</strain>
    </source>
</reference>
<reference key="6">
    <citation type="journal article" date="2009" name="Mol. Plant">
        <title>Comparative genomic study of the thioredoxin family in photosynthetic organisms with emphasis on Populus trichocarpa.</title>
        <authorList>
            <person name="Chibani K."/>
            <person name="Wingsle G."/>
            <person name="Jacquot J.P."/>
            <person name="Gelhaye E."/>
            <person name="Rouhier N."/>
        </authorList>
    </citation>
    <scope>GENE FAMILY</scope>
    <scope>NOMENCLATURE</scope>
</reference>
<comment type="function">
    <text evidence="2">Probable thiol-disulfide oxidoreductase that may play a role in proper chloroplast development.</text>
</comment>
<comment type="subcellular location">
    <subcellularLocation>
        <location evidence="3">Plastid</location>
        <location evidence="3">Chloroplast</location>
    </subcellularLocation>
</comment>
<comment type="similarity">
    <text evidence="6">Belongs to the thioredoxin family. Plant CITRX-type subfamily.</text>
</comment>
<gene>
    <name type="ordered locus">Os08g0378900</name>
    <name type="ordered locus">LOC_Os08g29110</name>
    <name type="ORF">OsJ_27130</name>
    <name type="ORF">OSJNBb0011E04.120</name>
    <name type="ORF">P0709D11.10</name>
</gene>
<keyword id="KW-0150">Chloroplast</keyword>
<keyword id="KW-1015">Disulfide bond</keyword>
<keyword id="KW-0249">Electron transport</keyword>
<keyword id="KW-0560">Oxidoreductase</keyword>
<keyword id="KW-0934">Plastid</keyword>
<keyword id="KW-0676">Redox-active center</keyword>
<keyword id="KW-1185">Reference proteome</keyword>
<keyword id="KW-0809">Transit peptide</keyword>
<keyword id="KW-0813">Transport</keyword>